<proteinExistence type="inferred from homology"/>
<name>DSRB_ESCF3</name>
<reference key="1">
    <citation type="journal article" date="2009" name="PLoS Genet.">
        <title>Organised genome dynamics in the Escherichia coli species results in highly diverse adaptive paths.</title>
        <authorList>
            <person name="Touchon M."/>
            <person name="Hoede C."/>
            <person name="Tenaillon O."/>
            <person name="Barbe V."/>
            <person name="Baeriswyl S."/>
            <person name="Bidet P."/>
            <person name="Bingen E."/>
            <person name="Bonacorsi S."/>
            <person name="Bouchier C."/>
            <person name="Bouvet O."/>
            <person name="Calteau A."/>
            <person name="Chiapello H."/>
            <person name="Clermont O."/>
            <person name="Cruveiller S."/>
            <person name="Danchin A."/>
            <person name="Diard M."/>
            <person name="Dossat C."/>
            <person name="Karoui M.E."/>
            <person name="Frapy E."/>
            <person name="Garry L."/>
            <person name="Ghigo J.M."/>
            <person name="Gilles A.M."/>
            <person name="Johnson J."/>
            <person name="Le Bouguenec C."/>
            <person name="Lescat M."/>
            <person name="Mangenot S."/>
            <person name="Martinez-Jehanne V."/>
            <person name="Matic I."/>
            <person name="Nassif X."/>
            <person name="Oztas S."/>
            <person name="Petit M.A."/>
            <person name="Pichon C."/>
            <person name="Rouy Z."/>
            <person name="Ruf C.S."/>
            <person name="Schneider D."/>
            <person name="Tourret J."/>
            <person name="Vacherie B."/>
            <person name="Vallenet D."/>
            <person name="Medigue C."/>
            <person name="Rocha E.P.C."/>
            <person name="Denamur E."/>
        </authorList>
    </citation>
    <scope>NUCLEOTIDE SEQUENCE [LARGE SCALE GENOMIC DNA]</scope>
    <source>
        <strain>ATCC 35469 / DSM 13698 / BCRC 15582 / CCUG 18766 / IAM 14443 / JCM 21226 / LMG 7866 / NBRC 102419 / NCTC 12128 / CDC 0568-73</strain>
    </source>
</reference>
<sequence>MKVNDRVTVKTDGGPRRPGVVLAVEEFNEGTMYLVSLEDYPLGIWFFNESGHPDGIFVEKME</sequence>
<evidence type="ECO:0000255" key="1">
    <source>
        <dbReference type="HAMAP-Rule" id="MF_01549"/>
    </source>
</evidence>
<comment type="similarity">
    <text evidence="1">Belongs to the DsrB family.</text>
</comment>
<feature type="chain" id="PRO_1000146854" description="Protein DsrB">
    <location>
        <begin position="1"/>
        <end position="62"/>
    </location>
</feature>
<gene>
    <name evidence="1" type="primary">dsrB</name>
    <name type="ordered locus">EFER_1937</name>
</gene>
<organism>
    <name type="scientific">Escherichia fergusonii (strain ATCC 35469 / DSM 13698 / CCUG 18766 / IAM 14443 / JCM 21226 / LMG 7866 / NBRC 102419 / NCTC 12128 / CDC 0568-73)</name>
    <dbReference type="NCBI Taxonomy" id="585054"/>
    <lineage>
        <taxon>Bacteria</taxon>
        <taxon>Pseudomonadati</taxon>
        <taxon>Pseudomonadota</taxon>
        <taxon>Gammaproteobacteria</taxon>
        <taxon>Enterobacterales</taxon>
        <taxon>Enterobacteriaceae</taxon>
        <taxon>Escherichia</taxon>
    </lineage>
</organism>
<dbReference type="EMBL" id="CU928158">
    <property type="protein sequence ID" value="CAQ89446.1"/>
    <property type="molecule type" value="Genomic_DNA"/>
</dbReference>
<dbReference type="RefSeq" id="WP_000867213.1">
    <property type="nucleotide sequence ID" value="NC_011740.1"/>
</dbReference>
<dbReference type="SMR" id="B7LTN9"/>
<dbReference type="GeneID" id="75057032"/>
<dbReference type="KEGG" id="efe:EFER_1937"/>
<dbReference type="HOGENOM" id="CLU_189289_0_0_6"/>
<dbReference type="OrthoDB" id="6548256at2"/>
<dbReference type="Proteomes" id="UP000000745">
    <property type="component" value="Chromosome"/>
</dbReference>
<dbReference type="HAMAP" id="MF_01549">
    <property type="entry name" value="DsrB"/>
    <property type="match status" value="1"/>
</dbReference>
<dbReference type="InterPro" id="IPR019717">
    <property type="entry name" value="Dextransucrase_DSRB"/>
</dbReference>
<dbReference type="NCBIfam" id="NF007981">
    <property type="entry name" value="PRK10708.1"/>
    <property type="match status" value="1"/>
</dbReference>
<dbReference type="Pfam" id="PF10781">
    <property type="entry name" value="DSRB"/>
    <property type="match status" value="1"/>
</dbReference>
<accession>B7LTN9</accession>
<protein>
    <recommendedName>
        <fullName evidence="1">Protein DsrB</fullName>
    </recommendedName>
</protein>